<protein>
    <recommendedName>
        <fullName evidence="1">Large ribosomal subunit protein bL19</fullName>
    </recommendedName>
    <alternativeName>
        <fullName evidence="2">50S ribosomal protein L19</fullName>
    </alternativeName>
</protein>
<organism>
    <name type="scientific">Mycobacterium sp. (strain KMS)</name>
    <dbReference type="NCBI Taxonomy" id="189918"/>
    <lineage>
        <taxon>Bacteria</taxon>
        <taxon>Bacillati</taxon>
        <taxon>Actinomycetota</taxon>
        <taxon>Actinomycetes</taxon>
        <taxon>Mycobacteriales</taxon>
        <taxon>Mycobacteriaceae</taxon>
        <taxon>Mycobacterium</taxon>
    </lineage>
</organism>
<sequence length="113" mass="12879">MNTLDFVDQSSLRDDIPAFGPGDTVNVHVKVIEGSKERIQVFKGVVIRRQGGGIRETFTVRKESYGVGVERTFPVHSPNIDHIDVVTRGDVRRAKLYYLRELRGKKAKIKEKR</sequence>
<name>RL19_MYCSK</name>
<reference key="1">
    <citation type="submission" date="2006-12" db="EMBL/GenBank/DDBJ databases">
        <title>Complete sequence of chromosome of Mycobacterium sp. KMS.</title>
        <authorList>
            <consortium name="US DOE Joint Genome Institute"/>
            <person name="Copeland A."/>
            <person name="Lucas S."/>
            <person name="Lapidus A."/>
            <person name="Barry K."/>
            <person name="Detter J.C."/>
            <person name="Glavina del Rio T."/>
            <person name="Hammon N."/>
            <person name="Israni S."/>
            <person name="Dalin E."/>
            <person name="Tice H."/>
            <person name="Pitluck S."/>
            <person name="Kiss H."/>
            <person name="Brettin T."/>
            <person name="Bruce D."/>
            <person name="Han C."/>
            <person name="Tapia R."/>
            <person name="Gilna P."/>
            <person name="Schmutz J."/>
            <person name="Larimer F."/>
            <person name="Land M."/>
            <person name="Hauser L."/>
            <person name="Kyrpides N."/>
            <person name="Mikhailova N."/>
            <person name="Miller C.D."/>
            <person name="Richardson P."/>
        </authorList>
    </citation>
    <scope>NUCLEOTIDE SEQUENCE [LARGE SCALE GENOMIC DNA]</scope>
    <source>
        <strain>KMS</strain>
    </source>
</reference>
<evidence type="ECO:0000255" key="1">
    <source>
        <dbReference type="HAMAP-Rule" id="MF_00402"/>
    </source>
</evidence>
<evidence type="ECO:0000305" key="2"/>
<proteinExistence type="inferred from homology"/>
<accession>A1UEF7</accession>
<feature type="chain" id="PRO_1000049702" description="Large ribosomal subunit protein bL19">
    <location>
        <begin position="1"/>
        <end position="113"/>
    </location>
</feature>
<keyword id="KW-0687">Ribonucleoprotein</keyword>
<keyword id="KW-0689">Ribosomal protein</keyword>
<comment type="function">
    <text evidence="1">This protein is located at the 30S-50S ribosomal subunit interface and may play a role in the structure and function of the aminoacyl-tRNA binding site.</text>
</comment>
<comment type="similarity">
    <text evidence="1">Belongs to the bacterial ribosomal protein bL19 family.</text>
</comment>
<dbReference type="EMBL" id="CP000518">
    <property type="protein sequence ID" value="ABL91215.1"/>
    <property type="molecule type" value="Genomic_DNA"/>
</dbReference>
<dbReference type="SMR" id="A1UEF7"/>
<dbReference type="STRING" id="189918.Mkms_2016"/>
<dbReference type="KEGG" id="mkm:Mkms_2016"/>
<dbReference type="HOGENOM" id="CLU_103507_2_1_11"/>
<dbReference type="OrthoDB" id="9803541at2"/>
<dbReference type="GO" id="GO:0022625">
    <property type="term" value="C:cytosolic large ribosomal subunit"/>
    <property type="evidence" value="ECO:0007669"/>
    <property type="project" value="TreeGrafter"/>
</dbReference>
<dbReference type="GO" id="GO:0003735">
    <property type="term" value="F:structural constituent of ribosome"/>
    <property type="evidence" value="ECO:0007669"/>
    <property type="project" value="InterPro"/>
</dbReference>
<dbReference type="GO" id="GO:0006412">
    <property type="term" value="P:translation"/>
    <property type="evidence" value="ECO:0007669"/>
    <property type="project" value="UniProtKB-UniRule"/>
</dbReference>
<dbReference type="FunFam" id="2.30.30.790:FF:000001">
    <property type="entry name" value="50S ribosomal protein L19"/>
    <property type="match status" value="1"/>
</dbReference>
<dbReference type="Gene3D" id="2.30.30.790">
    <property type="match status" value="1"/>
</dbReference>
<dbReference type="HAMAP" id="MF_00402">
    <property type="entry name" value="Ribosomal_bL19"/>
    <property type="match status" value="1"/>
</dbReference>
<dbReference type="InterPro" id="IPR001857">
    <property type="entry name" value="Ribosomal_bL19"/>
</dbReference>
<dbReference type="InterPro" id="IPR018257">
    <property type="entry name" value="Ribosomal_bL19_CS"/>
</dbReference>
<dbReference type="InterPro" id="IPR038657">
    <property type="entry name" value="Ribosomal_bL19_sf"/>
</dbReference>
<dbReference type="InterPro" id="IPR008991">
    <property type="entry name" value="Translation_prot_SH3-like_sf"/>
</dbReference>
<dbReference type="NCBIfam" id="TIGR01024">
    <property type="entry name" value="rplS_bact"/>
    <property type="match status" value="1"/>
</dbReference>
<dbReference type="PANTHER" id="PTHR15680:SF9">
    <property type="entry name" value="LARGE RIBOSOMAL SUBUNIT PROTEIN BL19M"/>
    <property type="match status" value="1"/>
</dbReference>
<dbReference type="PANTHER" id="PTHR15680">
    <property type="entry name" value="RIBOSOMAL PROTEIN L19"/>
    <property type="match status" value="1"/>
</dbReference>
<dbReference type="Pfam" id="PF01245">
    <property type="entry name" value="Ribosomal_L19"/>
    <property type="match status" value="1"/>
</dbReference>
<dbReference type="PIRSF" id="PIRSF002191">
    <property type="entry name" value="Ribosomal_L19"/>
    <property type="match status" value="1"/>
</dbReference>
<dbReference type="PRINTS" id="PR00061">
    <property type="entry name" value="RIBOSOMALL19"/>
</dbReference>
<dbReference type="SUPFAM" id="SSF50104">
    <property type="entry name" value="Translation proteins SH3-like domain"/>
    <property type="match status" value="1"/>
</dbReference>
<dbReference type="PROSITE" id="PS01015">
    <property type="entry name" value="RIBOSOMAL_L19"/>
    <property type="match status" value="1"/>
</dbReference>
<gene>
    <name evidence="1" type="primary">rplS</name>
    <name type="ordered locus">Mkms_2016</name>
</gene>